<organism>
    <name type="scientific">Methanothermobacter marburgensis (strain ATCC BAA-927 / DSM 2133 / JCM 14651 / NBRC 100331 / OCM 82 / Marburg)</name>
    <name type="common">Methanobacterium thermoautotrophicum</name>
    <dbReference type="NCBI Taxonomy" id="79929"/>
    <lineage>
        <taxon>Archaea</taxon>
        <taxon>Methanobacteriati</taxon>
        <taxon>Methanobacteriota</taxon>
        <taxon>Methanomada group</taxon>
        <taxon>Methanobacteria</taxon>
        <taxon>Methanobacteriales</taxon>
        <taxon>Methanobacteriaceae</taxon>
        <taxon>Methanothermobacter</taxon>
    </lineage>
</organism>
<gene>
    <name type="ordered locus">MTBMA_c00490</name>
</gene>
<name>Y049_METTM</name>
<reference key="1">
    <citation type="journal article" date="1995" name="J. Biol. Chem.">
        <title>Cloning, sequencing, and transcriptional analysis of the coenzyme F420-dependent methylene-5,6,7,8-tetrahydromethanopterin dehydrogenase gene from Methanobacterium thermoautotrophicum strain Marburg and functional expression in Escherichia coli.</title>
        <authorList>
            <person name="Mukhopadhyay B."/>
            <person name="Purwantini E."/>
            <person name="Pihl T.D."/>
            <person name="Reeve J.N."/>
            <person name="Daniels L."/>
        </authorList>
    </citation>
    <scope>NUCLEOTIDE SEQUENCE [GENOMIC DNA]</scope>
    <source>
        <strain>ATCC BAA-927 / DSM 2133 / JCM 14651 / NBRC 100331 / OCM 82 / Marburg</strain>
    </source>
</reference>
<reference key="2">
    <citation type="journal article" date="2010" name="J. Bacteriol.">
        <title>Complete genome sequence of Methanothermobacter marburgensis, a methanoarchaeon model organism.</title>
        <authorList>
            <person name="Liesegang H."/>
            <person name="Kaster A.K."/>
            <person name="Wiezer A."/>
            <person name="Goenrich M."/>
            <person name="Wollherr A."/>
            <person name="Seedorf H."/>
            <person name="Gottschalk G."/>
            <person name="Thauer R.K."/>
        </authorList>
    </citation>
    <scope>NUCLEOTIDE SEQUENCE [LARGE SCALE GENOMIC DNA]</scope>
    <source>
        <strain>ATCC BAA-927 / DSM 2133 / JCM 14651 / NBRC 100331 / OCM 82 / Marburg</strain>
    </source>
</reference>
<comment type="sequence caution" evidence="2">
    <conflict type="erroneous initiation">
        <sequence resource="EMBL-CDS" id="AAC41462"/>
    </conflict>
    <text>Extended N-terminus.</text>
</comment>
<comment type="sequence caution" evidence="2">
    <conflict type="erroneous initiation">
        <sequence resource="EMBL-CDS" id="ADL57659"/>
    </conflict>
    <text>Truncated N-terminus.</text>
</comment>
<dbReference type="EMBL" id="L37108">
    <property type="protein sequence ID" value="AAC41462.1"/>
    <property type="status" value="ALT_INIT"/>
    <property type="molecule type" value="Genomic_DNA"/>
</dbReference>
<dbReference type="EMBL" id="CP001710">
    <property type="protein sequence ID" value="ADL57659.1"/>
    <property type="status" value="ALT_INIT"/>
    <property type="molecule type" value="Genomic_DNA"/>
</dbReference>
<dbReference type="PIR" id="A55712">
    <property type="entry name" value="A55712"/>
</dbReference>
<dbReference type="SMR" id="Q50770"/>
<dbReference type="STRING" id="79929.MTBMA_c00490"/>
<dbReference type="PaxDb" id="79929-MTBMA_c00490"/>
<dbReference type="KEGG" id="mmg:MTBMA_c00490"/>
<dbReference type="HOGENOM" id="CLU_1860740_0_0_2"/>
<dbReference type="OrthoDB" id="80706at2157"/>
<dbReference type="Proteomes" id="UP000000345">
    <property type="component" value="Chromosome"/>
</dbReference>
<dbReference type="GO" id="GO:0016020">
    <property type="term" value="C:membrane"/>
    <property type="evidence" value="ECO:0007669"/>
    <property type="project" value="InterPro"/>
</dbReference>
<dbReference type="GO" id="GO:0005524">
    <property type="term" value="F:ATP binding"/>
    <property type="evidence" value="ECO:0007669"/>
    <property type="project" value="InterPro"/>
</dbReference>
<dbReference type="GO" id="GO:0008234">
    <property type="term" value="F:cysteine-type peptidase activity"/>
    <property type="evidence" value="ECO:0007669"/>
    <property type="project" value="UniProtKB-KW"/>
</dbReference>
<dbReference type="GO" id="GO:0006508">
    <property type="term" value="P:proteolysis"/>
    <property type="evidence" value="ECO:0007669"/>
    <property type="project" value="UniProtKB-KW"/>
</dbReference>
<dbReference type="CDD" id="cd02423">
    <property type="entry name" value="Peptidase_C39G"/>
    <property type="match status" value="1"/>
</dbReference>
<dbReference type="Gene3D" id="3.90.70.10">
    <property type="entry name" value="Cysteine proteinases"/>
    <property type="match status" value="1"/>
</dbReference>
<dbReference type="InterPro" id="IPR005074">
    <property type="entry name" value="Peptidase_C39"/>
</dbReference>
<dbReference type="Pfam" id="PF03412">
    <property type="entry name" value="Peptidase_C39"/>
    <property type="match status" value="1"/>
</dbReference>
<dbReference type="PROSITE" id="PS50990">
    <property type="entry name" value="PEPTIDASE_C39"/>
    <property type="match status" value="1"/>
</dbReference>
<accession>Q50770</accession>
<accession>D9PYW4</accession>
<proteinExistence type="predicted"/>
<protein>
    <recommendedName>
        <fullName>Uncharacterized protein MTBMA_c00490</fullName>
    </recommendedName>
    <alternativeName>
        <fullName>ORFX</fullName>
    </alternativeName>
</protein>
<evidence type="ECO:0000255" key="1">
    <source>
        <dbReference type="PROSITE-ProRule" id="PRU00362"/>
    </source>
</evidence>
<evidence type="ECO:0000305" key="2"/>
<feature type="chain" id="PRO_0000138640" description="Uncharacterized protein MTBMA_c00490">
    <location>
        <begin position="1"/>
        <end position="142"/>
    </location>
</feature>
<feature type="domain" description="Peptidase C39" evidence="1">
    <location>
        <begin position="18"/>
        <end position="137"/>
    </location>
</feature>
<keyword id="KW-0378">Hydrolase</keyword>
<keyword id="KW-0645">Protease</keyword>
<keyword id="KW-0788">Thiol protease</keyword>
<sequence length="142" mass="15557">MEVFDMKSFLGDEVIVRQSSGYSCGPAALATVLRNLGVHCSEAELAELAGTDESGTTMYGLILAATSKGVSARGVRMEISDLRRNHIAFVRYGDTAHYTVVLSVDDRNITLADPAMGRIRIRRDIFSKIFTGNVLVVEREED</sequence>